<gene>
    <name evidence="1" type="primary">groEL</name>
    <name evidence="1" type="synonym">groL</name>
    <name type="ordered locus">Mrad2831_0534</name>
</gene>
<reference key="1">
    <citation type="submission" date="2008-03" db="EMBL/GenBank/DDBJ databases">
        <title>Complete sequence of chromosome of Methylobacterium radiotolerans JCM 2831.</title>
        <authorList>
            <consortium name="US DOE Joint Genome Institute"/>
            <person name="Copeland A."/>
            <person name="Lucas S."/>
            <person name="Lapidus A."/>
            <person name="Glavina del Rio T."/>
            <person name="Dalin E."/>
            <person name="Tice H."/>
            <person name="Bruce D."/>
            <person name="Goodwin L."/>
            <person name="Pitluck S."/>
            <person name="Kiss H."/>
            <person name="Brettin T."/>
            <person name="Detter J.C."/>
            <person name="Han C."/>
            <person name="Kuske C.R."/>
            <person name="Schmutz J."/>
            <person name="Larimer F."/>
            <person name="Land M."/>
            <person name="Hauser L."/>
            <person name="Kyrpides N."/>
            <person name="Mikhailova N."/>
            <person name="Marx C.J."/>
            <person name="Richardson P."/>
        </authorList>
    </citation>
    <scope>NUCLEOTIDE SEQUENCE [LARGE SCALE GENOMIC DNA]</scope>
    <source>
        <strain>ATCC 27329 / DSM 1819 / JCM 2831 / NBRC 15690 / NCIMB 10815 / 0-1</strain>
    </source>
</reference>
<comment type="function">
    <text evidence="1">Together with its co-chaperonin GroES, plays an essential role in assisting protein folding. The GroEL-GroES system forms a nano-cage that allows encapsulation of the non-native substrate proteins and provides a physical environment optimized to promote and accelerate protein folding.</text>
</comment>
<comment type="catalytic activity">
    <reaction evidence="1">
        <text>ATP + H2O + a folded polypeptide = ADP + phosphate + an unfolded polypeptide.</text>
        <dbReference type="EC" id="5.6.1.7"/>
    </reaction>
</comment>
<comment type="subunit">
    <text evidence="1">Forms a cylinder of 14 subunits composed of two heptameric rings stacked back-to-back. Interacts with the co-chaperonin GroES.</text>
</comment>
<comment type="subcellular location">
    <subcellularLocation>
        <location evidence="1">Cytoplasm</location>
    </subcellularLocation>
</comment>
<comment type="similarity">
    <text evidence="1">Belongs to the chaperonin (HSP60) family.</text>
</comment>
<feature type="chain" id="PRO_1000130038" description="Chaperonin GroEL">
    <location>
        <begin position="1"/>
        <end position="546"/>
    </location>
</feature>
<feature type="region of interest" description="Disordered" evidence="2">
    <location>
        <begin position="527"/>
        <end position="546"/>
    </location>
</feature>
<feature type="compositionally biased region" description="Gly residues" evidence="2">
    <location>
        <begin position="537"/>
        <end position="546"/>
    </location>
</feature>
<feature type="binding site" evidence="1">
    <location>
        <begin position="30"/>
        <end position="33"/>
    </location>
    <ligand>
        <name>ATP</name>
        <dbReference type="ChEBI" id="CHEBI:30616"/>
    </ligand>
</feature>
<feature type="binding site" evidence="1">
    <location>
        <position position="51"/>
    </location>
    <ligand>
        <name>ATP</name>
        <dbReference type="ChEBI" id="CHEBI:30616"/>
    </ligand>
</feature>
<feature type="binding site" evidence="1">
    <location>
        <begin position="87"/>
        <end position="91"/>
    </location>
    <ligand>
        <name>ATP</name>
        <dbReference type="ChEBI" id="CHEBI:30616"/>
    </ligand>
</feature>
<feature type="binding site" evidence="1">
    <location>
        <position position="415"/>
    </location>
    <ligand>
        <name>ATP</name>
        <dbReference type="ChEBI" id="CHEBI:30616"/>
    </ligand>
</feature>
<feature type="binding site" evidence="1">
    <location>
        <position position="497"/>
    </location>
    <ligand>
        <name>ATP</name>
        <dbReference type="ChEBI" id="CHEBI:30616"/>
    </ligand>
</feature>
<proteinExistence type="inferred from homology"/>
<name>CH60_METRJ</name>
<evidence type="ECO:0000255" key="1">
    <source>
        <dbReference type="HAMAP-Rule" id="MF_00600"/>
    </source>
</evidence>
<evidence type="ECO:0000256" key="2">
    <source>
        <dbReference type="SAM" id="MobiDB-lite"/>
    </source>
</evidence>
<accession>B1LVA0</accession>
<organism>
    <name type="scientific">Methylobacterium radiotolerans (strain ATCC 27329 / DSM 1819 / JCM 2831 / NBRC 15690 / NCIMB 10815 / 0-1)</name>
    <dbReference type="NCBI Taxonomy" id="426355"/>
    <lineage>
        <taxon>Bacteria</taxon>
        <taxon>Pseudomonadati</taxon>
        <taxon>Pseudomonadota</taxon>
        <taxon>Alphaproteobacteria</taxon>
        <taxon>Hyphomicrobiales</taxon>
        <taxon>Methylobacteriaceae</taxon>
        <taxon>Methylobacterium</taxon>
    </lineage>
</organism>
<keyword id="KW-0067">ATP-binding</keyword>
<keyword id="KW-0143">Chaperone</keyword>
<keyword id="KW-0963">Cytoplasm</keyword>
<keyword id="KW-0413">Isomerase</keyword>
<keyword id="KW-0547">Nucleotide-binding</keyword>
<sequence>MAAKDVRFSADARDKMLRGVDILADAVKVTLGPKGRNVVIEKSFGAPRITKDGVTVAKEIELADKFENMGAQMVREVASKTNDIAGDGTTTATVLAQAIVREGAKYVAAGINPMDLKRGIDLATQAAVKDIIARAKKVSTSDEVAQVGTISANGDKEIGEMIAHAMQKVGNEGVITVEEAKTAETELDVVEGMQFDRGYLSPYFITNAEKMVAELEDPYILIHEKKLSSLQAMLPVLEAVVQTGKPLLIIAEDIEGEALATLVVNKLRGGLKVAAVKAPGFGDRRKAMLEDIAILTKGQMIAEDLGIKLENVTLPMLGRAKRVRIEKENTTIIDGVGEKSDIEGRISQIKAQIEETTSDYDREKLQERLAKLAGGVAVIRVGGATEVEVKEKKDRVDDALNATRAAVEEGIVPGGGTALLRAKKAVAELKSDIPDVQAGIKIVLKALEAPLRQIAQNAGVEGSIVVGKITDNTSSETFGFNAQTEEYVDMIQAGIVDPAKVVRTALQDAASVAGLLVTTEAMVADAPKKDSPAPAMPGGGMGGMDF</sequence>
<protein>
    <recommendedName>
        <fullName evidence="1">Chaperonin GroEL</fullName>
        <ecNumber evidence="1">5.6.1.7</ecNumber>
    </recommendedName>
    <alternativeName>
        <fullName evidence="1">60 kDa chaperonin</fullName>
    </alternativeName>
    <alternativeName>
        <fullName evidence="1">Chaperonin-60</fullName>
        <shortName evidence="1">Cpn60</shortName>
    </alternativeName>
</protein>
<dbReference type="EC" id="5.6.1.7" evidence="1"/>
<dbReference type="EMBL" id="CP001001">
    <property type="protein sequence ID" value="ACB22545.1"/>
    <property type="molecule type" value="Genomic_DNA"/>
</dbReference>
<dbReference type="RefSeq" id="WP_012317541.1">
    <property type="nucleotide sequence ID" value="NC_010505.1"/>
</dbReference>
<dbReference type="SMR" id="B1LVA0"/>
<dbReference type="STRING" id="426355.Mrad2831_0534"/>
<dbReference type="GeneID" id="6136547"/>
<dbReference type="KEGG" id="mrd:Mrad2831_0534"/>
<dbReference type="eggNOG" id="COG0459">
    <property type="taxonomic scope" value="Bacteria"/>
</dbReference>
<dbReference type="HOGENOM" id="CLU_016503_3_0_5"/>
<dbReference type="OrthoDB" id="9766614at2"/>
<dbReference type="Proteomes" id="UP000006589">
    <property type="component" value="Chromosome"/>
</dbReference>
<dbReference type="GO" id="GO:0005737">
    <property type="term" value="C:cytoplasm"/>
    <property type="evidence" value="ECO:0007669"/>
    <property type="project" value="UniProtKB-SubCell"/>
</dbReference>
<dbReference type="GO" id="GO:0005524">
    <property type="term" value="F:ATP binding"/>
    <property type="evidence" value="ECO:0007669"/>
    <property type="project" value="UniProtKB-UniRule"/>
</dbReference>
<dbReference type="GO" id="GO:0140662">
    <property type="term" value="F:ATP-dependent protein folding chaperone"/>
    <property type="evidence" value="ECO:0007669"/>
    <property type="project" value="InterPro"/>
</dbReference>
<dbReference type="GO" id="GO:0016853">
    <property type="term" value="F:isomerase activity"/>
    <property type="evidence" value="ECO:0007669"/>
    <property type="project" value="UniProtKB-KW"/>
</dbReference>
<dbReference type="GO" id="GO:0051082">
    <property type="term" value="F:unfolded protein binding"/>
    <property type="evidence" value="ECO:0007669"/>
    <property type="project" value="UniProtKB-UniRule"/>
</dbReference>
<dbReference type="GO" id="GO:0042026">
    <property type="term" value="P:protein refolding"/>
    <property type="evidence" value="ECO:0007669"/>
    <property type="project" value="UniProtKB-UniRule"/>
</dbReference>
<dbReference type="CDD" id="cd03344">
    <property type="entry name" value="GroEL"/>
    <property type="match status" value="1"/>
</dbReference>
<dbReference type="FunFam" id="1.10.560.10:FF:000001">
    <property type="entry name" value="60 kDa chaperonin"/>
    <property type="match status" value="1"/>
</dbReference>
<dbReference type="FunFam" id="3.50.7.10:FF:000001">
    <property type="entry name" value="60 kDa chaperonin"/>
    <property type="match status" value="1"/>
</dbReference>
<dbReference type="Gene3D" id="3.50.7.10">
    <property type="entry name" value="GroEL"/>
    <property type="match status" value="1"/>
</dbReference>
<dbReference type="Gene3D" id="1.10.560.10">
    <property type="entry name" value="GroEL-like equatorial domain"/>
    <property type="match status" value="1"/>
</dbReference>
<dbReference type="Gene3D" id="3.30.260.10">
    <property type="entry name" value="TCP-1-like chaperonin intermediate domain"/>
    <property type="match status" value="1"/>
</dbReference>
<dbReference type="HAMAP" id="MF_00600">
    <property type="entry name" value="CH60"/>
    <property type="match status" value="1"/>
</dbReference>
<dbReference type="InterPro" id="IPR018370">
    <property type="entry name" value="Chaperonin_Cpn60_CS"/>
</dbReference>
<dbReference type="InterPro" id="IPR001844">
    <property type="entry name" value="Cpn60/GroEL"/>
</dbReference>
<dbReference type="InterPro" id="IPR002423">
    <property type="entry name" value="Cpn60/GroEL/TCP-1"/>
</dbReference>
<dbReference type="InterPro" id="IPR027409">
    <property type="entry name" value="GroEL-like_apical_dom_sf"/>
</dbReference>
<dbReference type="InterPro" id="IPR027413">
    <property type="entry name" value="GROEL-like_equatorial_sf"/>
</dbReference>
<dbReference type="InterPro" id="IPR027410">
    <property type="entry name" value="TCP-1-like_intermed_sf"/>
</dbReference>
<dbReference type="NCBIfam" id="TIGR02348">
    <property type="entry name" value="GroEL"/>
    <property type="match status" value="1"/>
</dbReference>
<dbReference type="NCBIfam" id="NF000592">
    <property type="entry name" value="PRK00013.1"/>
    <property type="match status" value="1"/>
</dbReference>
<dbReference type="NCBIfam" id="NF009487">
    <property type="entry name" value="PRK12849.1"/>
    <property type="match status" value="1"/>
</dbReference>
<dbReference type="NCBIfam" id="NF009488">
    <property type="entry name" value="PRK12850.1"/>
    <property type="match status" value="1"/>
</dbReference>
<dbReference type="NCBIfam" id="NF009489">
    <property type="entry name" value="PRK12851.1"/>
    <property type="match status" value="1"/>
</dbReference>
<dbReference type="PANTHER" id="PTHR45633">
    <property type="entry name" value="60 KDA HEAT SHOCK PROTEIN, MITOCHONDRIAL"/>
    <property type="match status" value="1"/>
</dbReference>
<dbReference type="Pfam" id="PF00118">
    <property type="entry name" value="Cpn60_TCP1"/>
    <property type="match status" value="1"/>
</dbReference>
<dbReference type="PRINTS" id="PR00298">
    <property type="entry name" value="CHAPERONIN60"/>
</dbReference>
<dbReference type="SUPFAM" id="SSF52029">
    <property type="entry name" value="GroEL apical domain-like"/>
    <property type="match status" value="1"/>
</dbReference>
<dbReference type="SUPFAM" id="SSF48592">
    <property type="entry name" value="GroEL equatorial domain-like"/>
    <property type="match status" value="1"/>
</dbReference>
<dbReference type="SUPFAM" id="SSF54849">
    <property type="entry name" value="GroEL-intermediate domain like"/>
    <property type="match status" value="1"/>
</dbReference>
<dbReference type="PROSITE" id="PS00296">
    <property type="entry name" value="CHAPERONINS_CPN60"/>
    <property type="match status" value="1"/>
</dbReference>